<comment type="similarity">
    <text evidence="1">Belongs to the UPF0251 family.</text>
</comment>
<comment type="sequence caution" evidence="1">
    <conflict type="erroneous initiation">
        <sequence resource="EMBL-CDS" id="CCE70703"/>
    </conflict>
    <text>Extended N-terminus.</text>
</comment>
<protein>
    <recommendedName>
        <fullName>UPF0251 protein PYRAB12660</fullName>
    </recommendedName>
</protein>
<evidence type="ECO:0000305" key="1"/>
<dbReference type="EMBL" id="AJ248287">
    <property type="protein sequence ID" value="CAB50171.1"/>
    <property type="molecule type" value="Genomic_DNA"/>
</dbReference>
<dbReference type="EMBL" id="HE613800">
    <property type="protein sequence ID" value="CCE70703.1"/>
    <property type="status" value="ALT_INIT"/>
    <property type="molecule type" value="Genomic_DNA"/>
</dbReference>
<dbReference type="PIR" id="F75034">
    <property type="entry name" value="F75034"/>
</dbReference>
<dbReference type="RefSeq" id="WP_048147313.1">
    <property type="nucleotide sequence ID" value="NC_000868.1"/>
</dbReference>
<dbReference type="SMR" id="Q9UZ88"/>
<dbReference type="STRING" id="272844.PAB1543"/>
<dbReference type="KEGG" id="pab:PAB1543"/>
<dbReference type="PATRIC" id="fig|272844.11.peg.1346"/>
<dbReference type="eggNOG" id="arCOG02238">
    <property type="taxonomic scope" value="Archaea"/>
</dbReference>
<dbReference type="HOGENOM" id="CLU_094511_2_0_2"/>
<dbReference type="OrthoDB" id="74471at2157"/>
<dbReference type="PhylomeDB" id="Q9UZ88"/>
<dbReference type="Proteomes" id="UP000000810">
    <property type="component" value="Chromosome"/>
</dbReference>
<dbReference type="Proteomes" id="UP000009139">
    <property type="component" value="Chromosome"/>
</dbReference>
<dbReference type="Gene3D" id="1.10.10.10">
    <property type="entry name" value="Winged helix-like DNA-binding domain superfamily/Winged helix DNA-binding domain"/>
    <property type="match status" value="1"/>
</dbReference>
<dbReference type="HAMAP" id="MF_00674">
    <property type="entry name" value="UPF0251"/>
    <property type="match status" value="1"/>
</dbReference>
<dbReference type="InterPro" id="IPR013324">
    <property type="entry name" value="RNA_pol_sigma_r3/r4-like"/>
</dbReference>
<dbReference type="InterPro" id="IPR002852">
    <property type="entry name" value="UPF0251"/>
</dbReference>
<dbReference type="InterPro" id="IPR036388">
    <property type="entry name" value="WH-like_DNA-bd_sf"/>
</dbReference>
<dbReference type="NCBIfam" id="NF003257">
    <property type="entry name" value="PRK04217.1"/>
    <property type="match status" value="1"/>
</dbReference>
<dbReference type="PANTHER" id="PTHR37478">
    <property type="match status" value="1"/>
</dbReference>
<dbReference type="PANTHER" id="PTHR37478:SF2">
    <property type="entry name" value="UPF0251 PROTEIN TK0562"/>
    <property type="match status" value="1"/>
</dbReference>
<dbReference type="Pfam" id="PF02001">
    <property type="entry name" value="DUF134"/>
    <property type="match status" value="1"/>
</dbReference>
<dbReference type="SUPFAM" id="SSF88659">
    <property type="entry name" value="Sigma3 and sigma4 domains of RNA polymerase sigma factors"/>
    <property type="match status" value="1"/>
</dbReference>
<sequence length="110" mass="12710">MPFGWGRGRGRRRKRRMIGFLPQVRHFYPAIPPVSIRQPPIIMTYEEFEALRLVDYEGLTQEEAGKRMGVSRGTLWRALTSARKKVAQMLVEGRELIILPQGNEVVSDEE</sequence>
<organism>
    <name type="scientific">Pyrococcus abyssi (strain GE5 / Orsay)</name>
    <dbReference type="NCBI Taxonomy" id="272844"/>
    <lineage>
        <taxon>Archaea</taxon>
        <taxon>Methanobacteriati</taxon>
        <taxon>Methanobacteriota</taxon>
        <taxon>Thermococci</taxon>
        <taxon>Thermococcales</taxon>
        <taxon>Thermococcaceae</taxon>
        <taxon>Pyrococcus</taxon>
    </lineage>
</organism>
<reference key="1">
    <citation type="journal article" date="2003" name="Mol. Microbiol.">
        <title>An integrated analysis of the genome of the hyperthermophilic archaeon Pyrococcus abyssi.</title>
        <authorList>
            <person name="Cohen G.N."/>
            <person name="Barbe V."/>
            <person name="Flament D."/>
            <person name="Galperin M."/>
            <person name="Heilig R."/>
            <person name="Lecompte O."/>
            <person name="Poch O."/>
            <person name="Prieur D."/>
            <person name="Querellou J."/>
            <person name="Ripp R."/>
            <person name="Thierry J.-C."/>
            <person name="Van der Oost J."/>
            <person name="Weissenbach J."/>
            <person name="Zivanovic Y."/>
            <person name="Forterre P."/>
        </authorList>
    </citation>
    <scope>NUCLEOTIDE SEQUENCE [LARGE SCALE GENOMIC DNA]</scope>
    <source>
        <strain>GE5 / Orsay</strain>
    </source>
</reference>
<reference key="2">
    <citation type="journal article" date="2012" name="Curr. Microbiol.">
        <title>Re-annotation of two hyperthermophilic archaea Pyrococcus abyssi GE5 and Pyrococcus furiosus DSM 3638.</title>
        <authorList>
            <person name="Gao J."/>
            <person name="Wang J."/>
        </authorList>
    </citation>
    <scope>GENOME REANNOTATION</scope>
    <source>
        <strain>GE5 / Orsay</strain>
    </source>
</reference>
<proteinExistence type="inferred from homology"/>
<gene>
    <name type="ordered locus">PYRAB12660</name>
    <name type="ORF">PAB1543</name>
</gene>
<feature type="chain" id="PRO_0000147582" description="UPF0251 protein PYRAB12660">
    <location>
        <begin position="1"/>
        <end position="110"/>
    </location>
</feature>
<name>Y1266_PYRAB</name>
<accession>Q9UZ88</accession>
<accession>G8ZKR0</accession>